<feature type="chain" id="PRO_0000243786" description="Small ribosomal subunit protein bS16">
    <location>
        <begin position="1"/>
        <end position="84"/>
    </location>
</feature>
<sequence>MVIIRLARGGSKKRPFYNIVATDSRNRRDGRFIERVGFYNPVATKGEALRIAQDRLTYWQGVGAQLSPTVERLVKQAQKAQPAA</sequence>
<proteinExistence type="inferred from homology"/>
<protein>
    <recommendedName>
        <fullName evidence="1">Small ribosomal subunit protein bS16</fullName>
    </recommendedName>
    <alternativeName>
        <fullName evidence="2">30S ribosomal protein S16</fullName>
    </alternativeName>
</protein>
<gene>
    <name evidence="1" type="primary">rpsP</name>
    <name type="ordered locus">BPSL2492</name>
</gene>
<dbReference type="EMBL" id="BX571965">
    <property type="protein sequence ID" value="CAH36498.1"/>
    <property type="molecule type" value="Genomic_DNA"/>
</dbReference>
<dbReference type="RefSeq" id="WP_004189402.1">
    <property type="nucleotide sequence ID" value="NZ_CP009538.1"/>
</dbReference>
<dbReference type="RefSeq" id="YP_109087.1">
    <property type="nucleotide sequence ID" value="NC_006350.1"/>
</dbReference>
<dbReference type="SMR" id="Q63S30"/>
<dbReference type="STRING" id="272560.BPSL2492"/>
<dbReference type="GeneID" id="93061079"/>
<dbReference type="KEGG" id="bps:BPSL2492"/>
<dbReference type="PATRIC" id="fig|272560.51.peg.2890"/>
<dbReference type="eggNOG" id="COG0228">
    <property type="taxonomic scope" value="Bacteria"/>
</dbReference>
<dbReference type="Proteomes" id="UP000000605">
    <property type="component" value="Chromosome 1"/>
</dbReference>
<dbReference type="GO" id="GO:0005737">
    <property type="term" value="C:cytoplasm"/>
    <property type="evidence" value="ECO:0007669"/>
    <property type="project" value="UniProtKB-ARBA"/>
</dbReference>
<dbReference type="GO" id="GO:0015935">
    <property type="term" value="C:small ribosomal subunit"/>
    <property type="evidence" value="ECO:0007669"/>
    <property type="project" value="TreeGrafter"/>
</dbReference>
<dbReference type="GO" id="GO:0003735">
    <property type="term" value="F:structural constituent of ribosome"/>
    <property type="evidence" value="ECO:0007669"/>
    <property type="project" value="InterPro"/>
</dbReference>
<dbReference type="GO" id="GO:0006412">
    <property type="term" value="P:translation"/>
    <property type="evidence" value="ECO:0007669"/>
    <property type="project" value="UniProtKB-UniRule"/>
</dbReference>
<dbReference type="Gene3D" id="3.30.1320.10">
    <property type="match status" value="1"/>
</dbReference>
<dbReference type="HAMAP" id="MF_00385">
    <property type="entry name" value="Ribosomal_bS16"/>
    <property type="match status" value="1"/>
</dbReference>
<dbReference type="InterPro" id="IPR000307">
    <property type="entry name" value="Ribosomal_bS16"/>
</dbReference>
<dbReference type="InterPro" id="IPR023803">
    <property type="entry name" value="Ribosomal_bS16_dom_sf"/>
</dbReference>
<dbReference type="NCBIfam" id="TIGR00002">
    <property type="entry name" value="S16"/>
    <property type="match status" value="1"/>
</dbReference>
<dbReference type="PANTHER" id="PTHR12919">
    <property type="entry name" value="30S RIBOSOMAL PROTEIN S16"/>
    <property type="match status" value="1"/>
</dbReference>
<dbReference type="PANTHER" id="PTHR12919:SF20">
    <property type="entry name" value="SMALL RIBOSOMAL SUBUNIT PROTEIN BS16M"/>
    <property type="match status" value="1"/>
</dbReference>
<dbReference type="Pfam" id="PF00886">
    <property type="entry name" value="Ribosomal_S16"/>
    <property type="match status" value="1"/>
</dbReference>
<dbReference type="SUPFAM" id="SSF54565">
    <property type="entry name" value="Ribosomal protein S16"/>
    <property type="match status" value="1"/>
</dbReference>
<accession>Q63S30</accession>
<name>RS16_BURPS</name>
<comment type="similarity">
    <text evidence="1">Belongs to the bacterial ribosomal protein bS16 family.</text>
</comment>
<keyword id="KW-1185">Reference proteome</keyword>
<keyword id="KW-0687">Ribonucleoprotein</keyword>
<keyword id="KW-0689">Ribosomal protein</keyword>
<evidence type="ECO:0000255" key="1">
    <source>
        <dbReference type="HAMAP-Rule" id="MF_00385"/>
    </source>
</evidence>
<evidence type="ECO:0000305" key="2"/>
<reference key="1">
    <citation type="journal article" date="2004" name="Proc. Natl. Acad. Sci. U.S.A.">
        <title>Genomic plasticity of the causative agent of melioidosis, Burkholderia pseudomallei.</title>
        <authorList>
            <person name="Holden M.T.G."/>
            <person name="Titball R.W."/>
            <person name="Peacock S.J."/>
            <person name="Cerdeno-Tarraga A.-M."/>
            <person name="Atkins T."/>
            <person name="Crossman L.C."/>
            <person name="Pitt T."/>
            <person name="Churcher C."/>
            <person name="Mungall K.L."/>
            <person name="Bentley S.D."/>
            <person name="Sebaihia M."/>
            <person name="Thomson N.R."/>
            <person name="Bason N."/>
            <person name="Beacham I.R."/>
            <person name="Brooks K."/>
            <person name="Brown K.A."/>
            <person name="Brown N.F."/>
            <person name="Challis G.L."/>
            <person name="Cherevach I."/>
            <person name="Chillingworth T."/>
            <person name="Cronin A."/>
            <person name="Crossett B."/>
            <person name="Davis P."/>
            <person name="DeShazer D."/>
            <person name="Feltwell T."/>
            <person name="Fraser A."/>
            <person name="Hance Z."/>
            <person name="Hauser H."/>
            <person name="Holroyd S."/>
            <person name="Jagels K."/>
            <person name="Keith K.E."/>
            <person name="Maddison M."/>
            <person name="Moule S."/>
            <person name="Price C."/>
            <person name="Quail M.A."/>
            <person name="Rabbinowitsch E."/>
            <person name="Rutherford K."/>
            <person name="Sanders M."/>
            <person name="Simmonds M."/>
            <person name="Songsivilai S."/>
            <person name="Stevens K."/>
            <person name="Tumapa S."/>
            <person name="Vesaratchavest M."/>
            <person name="Whitehead S."/>
            <person name="Yeats C."/>
            <person name="Barrell B.G."/>
            <person name="Oyston P.C.F."/>
            <person name="Parkhill J."/>
        </authorList>
    </citation>
    <scope>NUCLEOTIDE SEQUENCE [LARGE SCALE GENOMIC DNA]</scope>
    <source>
        <strain>K96243</strain>
    </source>
</reference>
<organism>
    <name type="scientific">Burkholderia pseudomallei (strain K96243)</name>
    <dbReference type="NCBI Taxonomy" id="272560"/>
    <lineage>
        <taxon>Bacteria</taxon>
        <taxon>Pseudomonadati</taxon>
        <taxon>Pseudomonadota</taxon>
        <taxon>Betaproteobacteria</taxon>
        <taxon>Burkholderiales</taxon>
        <taxon>Burkholderiaceae</taxon>
        <taxon>Burkholderia</taxon>
        <taxon>pseudomallei group</taxon>
    </lineage>
</organism>